<accession>B1Y4K6</accession>
<feature type="chain" id="PRO_1000139481" description="CTP synthase">
    <location>
        <begin position="1"/>
        <end position="563"/>
    </location>
</feature>
<feature type="domain" description="Glutamine amidotransferase type-1" evidence="1">
    <location>
        <begin position="305"/>
        <end position="557"/>
    </location>
</feature>
<feature type="region of interest" description="Amidoligase domain" evidence="1">
    <location>
        <begin position="1"/>
        <end position="280"/>
    </location>
</feature>
<feature type="active site" description="Nucleophile; for glutamine hydrolysis" evidence="1">
    <location>
        <position position="393"/>
    </location>
</feature>
<feature type="active site" evidence="1">
    <location>
        <position position="530"/>
    </location>
</feature>
<feature type="active site" evidence="1">
    <location>
        <position position="532"/>
    </location>
</feature>
<feature type="binding site" evidence="1">
    <location>
        <position position="13"/>
    </location>
    <ligand>
        <name>CTP</name>
        <dbReference type="ChEBI" id="CHEBI:37563"/>
        <note>allosteric inhibitor</note>
    </ligand>
</feature>
<feature type="binding site" evidence="1">
    <location>
        <position position="13"/>
    </location>
    <ligand>
        <name>UTP</name>
        <dbReference type="ChEBI" id="CHEBI:46398"/>
    </ligand>
</feature>
<feature type="binding site" evidence="1">
    <location>
        <begin position="14"/>
        <end position="19"/>
    </location>
    <ligand>
        <name>ATP</name>
        <dbReference type="ChEBI" id="CHEBI:30616"/>
    </ligand>
</feature>
<feature type="binding site" evidence="1">
    <location>
        <position position="71"/>
    </location>
    <ligand>
        <name>ATP</name>
        <dbReference type="ChEBI" id="CHEBI:30616"/>
    </ligand>
</feature>
<feature type="binding site" evidence="1">
    <location>
        <position position="71"/>
    </location>
    <ligand>
        <name>Mg(2+)</name>
        <dbReference type="ChEBI" id="CHEBI:18420"/>
    </ligand>
</feature>
<feature type="binding site" evidence="1">
    <location>
        <position position="154"/>
    </location>
    <ligand>
        <name>Mg(2+)</name>
        <dbReference type="ChEBI" id="CHEBI:18420"/>
    </ligand>
</feature>
<feature type="binding site" evidence="1">
    <location>
        <begin position="161"/>
        <end position="163"/>
    </location>
    <ligand>
        <name>CTP</name>
        <dbReference type="ChEBI" id="CHEBI:37563"/>
        <note>allosteric inhibitor</note>
    </ligand>
</feature>
<feature type="binding site" evidence="1">
    <location>
        <begin position="201"/>
        <end position="206"/>
    </location>
    <ligand>
        <name>CTP</name>
        <dbReference type="ChEBI" id="CHEBI:37563"/>
        <note>allosteric inhibitor</note>
    </ligand>
</feature>
<feature type="binding site" evidence="1">
    <location>
        <begin position="201"/>
        <end position="206"/>
    </location>
    <ligand>
        <name>UTP</name>
        <dbReference type="ChEBI" id="CHEBI:46398"/>
    </ligand>
</feature>
<feature type="binding site" evidence="1">
    <location>
        <position position="237"/>
    </location>
    <ligand>
        <name>CTP</name>
        <dbReference type="ChEBI" id="CHEBI:37563"/>
        <note>allosteric inhibitor</note>
    </ligand>
</feature>
<feature type="binding site" evidence="1">
    <location>
        <position position="237"/>
    </location>
    <ligand>
        <name>UTP</name>
        <dbReference type="ChEBI" id="CHEBI:46398"/>
    </ligand>
</feature>
<feature type="binding site" evidence="1">
    <location>
        <position position="366"/>
    </location>
    <ligand>
        <name>L-glutamine</name>
        <dbReference type="ChEBI" id="CHEBI:58359"/>
    </ligand>
</feature>
<feature type="binding site" evidence="1">
    <location>
        <begin position="394"/>
        <end position="397"/>
    </location>
    <ligand>
        <name>L-glutamine</name>
        <dbReference type="ChEBI" id="CHEBI:58359"/>
    </ligand>
</feature>
<feature type="binding site" evidence="1">
    <location>
        <position position="417"/>
    </location>
    <ligand>
        <name>L-glutamine</name>
        <dbReference type="ChEBI" id="CHEBI:58359"/>
    </ligand>
</feature>
<feature type="binding site" evidence="1">
    <location>
        <position position="483"/>
    </location>
    <ligand>
        <name>L-glutamine</name>
        <dbReference type="ChEBI" id="CHEBI:58359"/>
    </ligand>
</feature>
<sequence length="563" mass="62125">MTKFVFVTGGVVSSLGKGIAAASLAAILESRGLKVTLIKLDPYLNVDPGTMSPFQHGEVFVTEDGAETDLDLGHYERFITTRMKRSNNFTSGQIYKNVLEKERRGDYLGKTVQVIPHVTNEIQEFVKRGAGIGSHSGDDAKFGVGEPVDVAIVEIGGTVGDIESLPFLEAVRQLSLKMGPTNTAFVHLTYVPFIAAAGELKTKPTQHTVQKMREIGIQPDVLLCRADRPIPDEEREKISLFTNVALHGVISVWDADTIYKVPRMLHEQGLDEMICMKLQLLTKPANLSRWDRLVKEVEHPRREITIAMAGKYTELSDSYKSLNEALRHAGIQHHAKVNIEYVDSETLTPETAGELSKFDAILVPGGFGKRGIEGKIVAAQYAREHGIPYLGICLGMQVATIEYARHKAGLAGANSTEFEPDGPHPVIALIDEWQDADGSIQKRDANSDLGGTMRLGAQSSDVKAGTLAHEIYGDVVTERHRHRYEANQKYLQRLQDAGLVISAITQREKLTEMVELPRSVHPWYVGVQFHPEFKSTPWDGHPLFSSYIAAALEHHAALQKEAA</sequence>
<organism>
    <name type="scientific">Leptothrix cholodnii (strain ATCC 51168 / LMG 8142 / SP-6)</name>
    <name type="common">Leptothrix discophora (strain SP-6)</name>
    <dbReference type="NCBI Taxonomy" id="395495"/>
    <lineage>
        <taxon>Bacteria</taxon>
        <taxon>Pseudomonadati</taxon>
        <taxon>Pseudomonadota</taxon>
        <taxon>Betaproteobacteria</taxon>
        <taxon>Burkholderiales</taxon>
        <taxon>Sphaerotilaceae</taxon>
        <taxon>Leptothrix</taxon>
    </lineage>
</organism>
<evidence type="ECO:0000255" key="1">
    <source>
        <dbReference type="HAMAP-Rule" id="MF_01227"/>
    </source>
</evidence>
<dbReference type="EC" id="6.3.4.2" evidence="1"/>
<dbReference type="EMBL" id="CP001013">
    <property type="protein sequence ID" value="ACB33445.1"/>
    <property type="molecule type" value="Genomic_DNA"/>
</dbReference>
<dbReference type="RefSeq" id="WP_012346207.1">
    <property type="nucleotide sequence ID" value="NC_010524.1"/>
</dbReference>
<dbReference type="SMR" id="B1Y4K6"/>
<dbReference type="STRING" id="395495.Lcho_1176"/>
<dbReference type="MEROPS" id="C26.964"/>
<dbReference type="KEGG" id="lch:Lcho_1176"/>
<dbReference type="eggNOG" id="COG0504">
    <property type="taxonomic scope" value="Bacteria"/>
</dbReference>
<dbReference type="HOGENOM" id="CLU_011675_5_0_4"/>
<dbReference type="OrthoDB" id="9801107at2"/>
<dbReference type="UniPathway" id="UPA00159">
    <property type="reaction ID" value="UER00277"/>
</dbReference>
<dbReference type="Proteomes" id="UP000001693">
    <property type="component" value="Chromosome"/>
</dbReference>
<dbReference type="GO" id="GO:0005829">
    <property type="term" value="C:cytosol"/>
    <property type="evidence" value="ECO:0007669"/>
    <property type="project" value="TreeGrafter"/>
</dbReference>
<dbReference type="GO" id="GO:0005524">
    <property type="term" value="F:ATP binding"/>
    <property type="evidence" value="ECO:0007669"/>
    <property type="project" value="UniProtKB-KW"/>
</dbReference>
<dbReference type="GO" id="GO:0003883">
    <property type="term" value="F:CTP synthase activity"/>
    <property type="evidence" value="ECO:0007669"/>
    <property type="project" value="UniProtKB-UniRule"/>
</dbReference>
<dbReference type="GO" id="GO:0004359">
    <property type="term" value="F:glutaminase activity"/>
    <property type="evidence" value="ECO:0007669"/>
    <property type="project" value="RHEA"/>
</dbReference>
<dbReference type="GO" id="GO:0042802">
    <property type="term" value="F:identical protein binding"/>
    <property type="evidence" value="ECO:0007669"/>
    <property type="project" value="TreeGrafter"/>
</dbReference>
<dbReference type="GO" id="GO:0046872">
    <property type="term" value="F:metal ion binding"/>
    <property type="evidence" value="ECO:0007669"/>
    <property type="project" value="UniProtKB-KW"/>
</dbReference>
<dbReference type="GO" id="GO:0044210">
    <property type="term" value="P:'de novo' CTP biosynthetic process"/>
    <property type="evidence" value="ECO:0007669"/>
    <property type="project" value="UniProtKB-UniRule"/>
</dbReference>
<dbReference type="GO" id="GO:0019856">
    <property type="term" value="P:pyrimidine nucleobase biosynthetic process"/>
    <property type="evidence" value="ECO:0007669"/>
    <property type="project" value="TreeGrafter"/>
</dbReference>
<dbReference type="CDD" id="cd03113">
    <property type="entry name" value="CTPS_N"/>
    <property type="match status" value="1"/>
</dbReference>
<dbReference type="CDD" id="cd01746">
    <property type="entry name" value="GATase1_CTP_Synthase"/>
    <property type="match status" value="1"/>
</dbReference>
<dbReference type="FunFam" id="3.40.50.300:FF:000009">
    <property type="entry name" value="CTP synthase"/>
    <property type="match status" value="1"/>
</dbReference>
<dbReference type="FunFam" id="3.40.50.880:FF:000002">
    <property type="entry name" value="CTP synthase"/>
    <property type="match status" value="1"/>
</dbReference>
<dbReference type="Gene3D" id="3.40.50.880">
    <property type="match status" value="1"/>
</dbReference>
<dbReference type="Gene3D" id="3.40.50.300">
    <property type="entry name" value="P-loop containing nucleotide triphosphate hydrolases"/>
    <property type="match status" value="1"/>
</dbReference>
<dbReference type="HAMAP" id="MF_01227">
    <property type="entry name" value="PyrG"/>
    <property type="match status" value="1"/>
</dbReference>
<dbReference type="InterPro" id="IPR029062">
    <property type="entry name" value="Class_I_gatase-like"/>
</dbReference>
<dbReference type="InterPro" id="IPR004468">
    <property type="entry name" value="CTP_synthase"/>
</dbReference>
<dbReference type="InterPro" id="IPR017456">
    <property type="entry name" value="CTP_synthase_N"/>
</dbReference>
<dbReference type="InterPro" id="IPR017926">
    <property type="entry name" value="GATASE"/>
</dbReference>
<dbReference type="InterPro" id="IPR033828">
    <property type="entry name" value="GATase1_CTP_Synthase"/>
</dbReference>
<dbReference type="InterPro" id="IPR027417">
    <property type="entry name" value="P-loop_NTPase"/>
</dbReference>
<dbReference type="NCBIfam" id="NF003792">
    <property type="entry name" value="PRK05380.1"/>
    <property type="match status" value="1"/>
</dbReference>
<dbReference type="NCBIfam" id="TIGR00337">
    <property type="entry name" value="PyrG"/>
    <property type="match status" value="1"/>
</dbReference>
<dbReference type="PANTHER" id="PTHR11550">
    <property type="entry name" value="CTP SYNTHASE"/>
    <property type="match status" value="1"/>
</dbReference>
<dbReference type="PANTHER" id="PTHR11550:SF0">
    <property type="entry name" value="CTP SYNTHASE-RELATED"/>
    <property type="match status" value="1"/>
</dbReference>
<dbReference type="Pfam" id="PF06418">
    <property type="entry name" value="CTP_synth_N"/>
    <property type="match status" value="1"/>
</dbReference>
<dbReference type="Pfam" id="PF00117">
    <property type="entry name" value="GATase"/>
    <property type="match status" value="1"/>
</dbReference>
<dbReference type="SUPFAM" id="SSF52317">
    <property type="entry name" value="Class I glutamine amidotransferase-like"/>
    <property type="match status" value="1"/>
</dbReference>
<dbReference type="SUPFAM" id="SSF52540">
    <property type="entry name" value="P-loop containing nucleoside triphosphate hydrolases"/>
    <property type="match status" value="1"/>
</dbReference>
<dbReference type="PROSITE" id="PS51273">
    <property type="entry name" value="GATASE_TYPE_1"/>
    <property type="match status" value="1"/>
</dbReference>
<comment type="function">
    <text evidence="1">Catalyzes the ATP-dependent amination of UTP to CTP with either L-glutamine or ammonia as the source of nitrogen. Regulates intracellular CTP levels through interactions with the four ribonucleotide triphosphates.</text>
</comment>
<comment type="catalytic activity">
    <reaction evidence="1">
        <text>UTP + L-glutamine + ATP + H2O = CTP + L-glutamate + ADP + phosphate + 2 H(+)</text>
        <dbReference type="Rhea" id="RHEA:26426"/>
        <dbReference type="ChEBI" id="CHEBI:15377"/>
        <dbReference type="ChEBI" id="CHEBI:15378"/>
        <dbReference type="ChEBI" id="CHEBI:29985"/>
        <dbReference type="ChEBI" id="CHEBI:30616"/>
        <dbReference type="ChEBI" id="CHEBI:37563"/>
        <dbReference type="ChEBI" id="CHEBI:43474"/>
        <dbReference type="ChEBI" id="CHEBI:46398"/>
        <dbReference type="ChEBI" id="CHEBI:58359"/>
        <dbReference type="ChEBI" id="CHEBI:456216"/>
        <dbReference type="EC" id="6.3.4.2"/>
    </reaction>
</comment>
<comment type="catalytic activity">
    <reaction evidence="1">
        <text>L-glutamine + H2O = L-glutamate + NH4(+)</text>
        <dbReference type="Rhea" id="RHEA:15889"/>
        <dbReference type="ChEBI" id="CHEBI:15377"/>
        <dbReference type="ChEBI" id="CHEBI:28938"/>
        <dbReference type="ChEBI" id="CHEBI:29985"/>
        <dbReference type="ChEBI" id="CHEBI:58359"/>
    </reaction>
</comment>
<comment type="catalytic activity">
    <reaction evidence="1">
        <text>UTP + NH4(+) + ATP = CTP + ADP + phosphate + 2 H(+)</text>
        <dbReference type="Rhea" id="RHEA:16597"/>
        <dbReference type="ChEBI" id="CHEBI:15378"/>
        <dbReference type="ChEBI" id="CHEBI:28938"/>
        <dbReference type="ChEBI" id="CHEBI:30616"/>
        <dbReference type="ChEBI" id="CHEBI:37563"/>
        <dbReference type="ChEBI" id="CHEBI:43474"/>
        <dbReference type="ChEBI" id="CHEBI:46398"/>
        <dbReference type="ChEBI" id="CHEBI:456216"/>
    </reaction>
</comment>
<comment type="activity regulation">
    <text evidence="1">Allosterically activated by GTP, when glutamine is the substrate; GTP has no effect on the reaction when ammonia is the substrate. The allosteric effector GTP functions by stabilizing the protein conformation that binds the tetrahedral intermediate(s) formed during glutamine hydrolysis. Inhibited by the product CTP, via allosteric rather than competitive inhibition.</text>
</comment>
<comment type="pathway">
    <text evidence="1">Pyrimidine metabolism; CTP biosynthesis via de novo pathway; CTP from UDP: step 2/2.</text>
</comment>
<comment type="subunit">
    <text evidence="1">Homotetramer.</text>
</comment>
<comment type="miscellaneous">
    <text evidence="1">CTPSs have evolved a hybrid strategy for distinguishing between UTP and CTP. The overlapping regions of the product feedback inhibitory and substrate sites recognize a common feature in both compounds, the triphosphate moiety. To differentiate isosteric substrate and product pyrimidine rings, an additional pocket far from the expected kinase/ligase catalytic site, specifically recognizes the cytosine and ribose portions of the product inhibitor.</text>
</comment>
<comment type="similarity">
    <text evidence="1">Belongs to the CTP synthase family.</text>
</comment>
<protein>
    <recommendedName>
        <fullName evidence="1">CTP synthase</fullName>
        <ecNumber evidence="1">6.3.4.2</ecNumber>
    </recommendedName>
    <alternativeName>
        <fullName evidence="1">Cytidine 5'-triphosphate synthase</fullName>
    </alternativeName>
    <alternativeName>
        <fullName evidence="1">Cytidine triphosphate synthetase</fullName>
        <shortName evidence="1">CTP synthetase</shortName>
        <shortName evidence="1">CTPS</shortName>
    </alternativeName>
    <alternativeName>
        <fullName evidence="1">UTP--ammonia ligase</fullName>
    </alternativeName>
</protein>
<keyword id="KW-0067">ATP-binding</keyword>
<keyword id="KW-0315">Glutamine amidotransferase</keyword>
<keyword id="KW-0436">Ligase</keyword>
<keyword id="KW-0460">Magnesium</keyword>
<keyword id="KW-0479">Metal-binding</keyword>
<keyword id="KW-0547">Nucleotide-binding</keyword>
<keyword id="KW-0665">Pyrimidine biosynthesis</keyword>
<keyword id="KW-1185">Reference proteome</keyword>
<gene>
    <name evidence="1" type="primary">pyrG</name>
    <name type="ordered locus">Lcho_1176</name>
</gene>
<name>PYRG_LEPCP</name>
<reference key="1">
    <citation type="submission" date="2008-03" db="EMBL/GenBank/DDBJ databases">
        <title>Complete sequence of Leptothrix cholodnii SP-6.</title>
        <authorList>
            <consortium name="US DOE Joint Genome Institute"/>
            <person name="Copeland A."/>
            <person name="Lucas S."/>
            <person name="Lapidus A."/>
            <person name="Glavina del Rio T."/>
            <person name="Dalin E."/>
            <person name="Tice H."/>
            <person name="Bruce D."/>
            <person name="Goodwin L."/>
            <person name="Pitluck S."/>
            <person name="Chertkov O."/>
            <person name="Brettin T."/>
            <person name="Detter J.C."/>
            <person name="Han C."/>
            <person name="Kuske C.R."/>
            <person name="Schmutz J."/>
            <person name="Larimer F."/>
            <person name="Land M."/>
            <person name="Hauser L."/>
            <person name="Kyrpides N."/>
            <person name="Lykidis A."/>
            <person name="Emerson D."/>
            <person name="Richardson P."/>
        </authorList>
    </citation>
    <scope>NUCLEOTIDE SEQUENCE [LARGE SCALE GENOMIC DNA]</scope>
    <source>
        <strain>ATCC 51168 / LMG 8142 / SP-6</strain>
    </source>
</reference>
<proteinExistence type="inferred from homology"/>